<reference key="1">
    <citation type="journal article" date="2009" name="Genome Res.">
        <title>Comparative genomic analyses of the human fungal pathogens Coccidioides and their relatives.</title>
        <authorList>
            <person name="Sharpton T.J."/>
            <person name="Stajich J.E."/>
            <person name="Rounsley S.D."/>
            <person name="Gardner M.J."/>
            <person name="Wortman J.R."/>
            <person name="Jordar V.S."/>
            <person name="Maiti R."/>
            <person name="Kodira C.D."/>
            <person name="Neafsey D.E."/>
            <person name="Zeng Q."/>
            <person name="Hung C.-Y."/>
            <person name="McMahan C."/>
            <person name="Muszewska A."/>
            <person name="Grynberg M."/>
            <person name="Mandel M.A."/>
            <person name="Kellner E.M."/>
            <person name="Barker B.M."/>
            <person name="Galgiani J.N."/>
            <person name="Orbach M.J."/>
            <person name="Kirkland T.N."/>
            <person name="Cole G.T."/>
            <person name="Henn M.R."/>
            <person name="Birren B.W."/>
            <person name="Taylor J.W."/>
        </authorList>
    </citation>
    <scope>NUCLEOTIDE SEQUENCE [LARGE SCALE GENOMIC DNA]</scope>
    <source>
        <strain>RS</strain>
    </source>
</reference>
<reference key="2">
    <citation type="journal article" date="2010" name="Genome Res.">
        <title>Population genomic sequencing of Coccidioides fungi reveals recent hybridization and transposon control.</title>
        <authorList>
            <person name="Neafsey D.E."/>
            <person name="Barker B.M."/>
            <person name="Sharpton T.J."/>
            <person name="Stajich J.E."/>
            <person name="Park D.J."/>
            <person name="Whiston E."/>
            <person name="Hung C.-Y."/>
            <person name="McMahan C."/>
            <person name="White J."/>
            <person name="Sykes S."/>
            <person name="Heiman D."/>
            <person name="Young S."/>
            <person name="Zeng Q."/>
            <person name="Abouelleil A."/>
            <person name="Aftuck L."/>
            <person name="Bessette D."/>
            <person name="Brown A."/>
            <person name="FitzGerald M."/>
            <person name="Lui A."/>
            <person name="Macdonald J.P."/>
            <person name="Priest M."/>
            <person name="Orbach M.J."/>
            <person name="Galgiani J.N."/>
            <person name="Kirkland T.N."/>
            <person name="Cole G.T."/>
            <person name="Birren B.W."/>
            <person name="Henn M.R."/>
            <person name="Taylor J.W."/>
            <person name="Rounsley S.D."/>
        </authorList>
    </citation>
    <scope>GENOME REANNOTATION</scope>
    <source>
        <strain>RS</strain>
    </source>
</reference>
<organism>
    <name type="scientific">Coccidioides immitis (strain RS)</name>
    <name type="common">Valley fever fungus</name>
    <dbReference type="NCBI Taxonomy" id="246410"/>
    <lineage>
        <taxon>Eukaryota</taxon>
        <taxon>Fungi</taxon>
        <taxon>Dikarya</taxon>
        <taxon>Ascomycota</taxon>
        <taxon>Pezizomycotina</taxon>
        <taxon>Eurotiomycetes</taxon>
        <taxon>Eurotiomycetidae</taxon>
        <taxon>Onygenales</taxon>
        <taxon>Onygenaceae</taxon>
        <taxon>Coccidioides</taxon>
    </lineage>
</organism>
<evidence type="ECO:0000250" key="1"/>
<evidence type="ECO:0000256" key="2">
    <source>
        <dbReference type="SAM" id="MobiDB-lite"/>
    </source>
</evidence>
<evidence type="ECO:0000305" key="3"/>
<accession>Q1E6U9</accession>
<accession>J3KK44</accession>
<feature type="chain" id="PRO_0000295485" description="Protein transport protein SEC24">
    <location>
        <begin position="1"/>
        <end position="932"/>
    </location>
</feature>
<feature type="region of interest" description="Disordered" evidence="2">
    <location>
        <begin position="1"/>
        <end position="58"/>
    </location>
</feature>
<feature type="region of interest" description="Disordered" evidence="2">
    <location>
        <begin position="81"/>
        <end position="109"/>
    </location>
</feature>
<feature type="region of interest" description="Zinc finger-like">
    <location>
        <begin position="255"/>
        <end position="280"/>
    </location>
</feature>
<feature type="compositionally biased region" description="Low complexity" evidence="2">
    <location>
        <begin position="15"/>
        <end position="28"/>
    </location>
</feature>
<feature type="compositionally biased region" description="Pro residues" evidence="2">
    <location>
        <begin position="86"/>
        <end position="106"/>
    </location>
</feature>
<feature type="binding site" evidence="1">
    <location>
        <position position="255"/>
    </location>
    <ligand>
        <name>Zn(2+)</name>
        <dbReference type="ChEBI" id="CHEBI:29105"/>
    </ligand>
</feature>
<feature type="binding site" evidence="1">
    <location>
        <position position="258"/>
    </location>
    <ligand>
        <name>Zn(2+)</name>
        <dbReference type="ChEBI" id="CHEBI:29105"/>
    </ligand>
</feature>
<feature type="binding site" evidence="1">
    <location>
        <position position="277"/>
    </location>
    <ligand>
        <name>Zn(2+)</name>
        <dbReference type="ChEBI" id="CHEBI:29105"/>
    </ligand>
</feature>
<feature type="binding site" evidence="1">
    <location>
        <position position="280"/>
    </location>
    <ligand>
        <name>Zn(2+)</name>
        <dbReference type="ChEBI" id="CHEBI:29105"/>
    </ligand>
</feature>
<protein>
    <recommendedName>
        <fullName>Protein transport protein SEC24</fullName>
    </recommendedName>
</protein>
<sequence length="932" mass="101401">MAAPQEGYPPPHSDGQQGYGQPYGAPPAEADQPVAPPPAGAPATGGPTHGGRKKRAYAGQAFEFGSGANAALGGQLPGGGTYGGYPAPPQPQGYPPVPYPGQPAQPAPETYAAGEQLGAGGYQPPGPGYPAADVSQITQQMGQMSMGGQMPGRAPGATSLNQLYPTDLLAQSFNVAELDFPPPPVILPPNASVTPSPTANCSAKFVRSTLNAVPTTNSLLKKSRLPFALVIQPFTSLHDSEDPVPIVSDQIISRCRRCRSYINPFVTFLDHGHRWRCNMCNLTNDVPQGFDWDATAQQALDRWQRPELNHAVVEFVAPQEYMVRPPQPLVYLFLIDVSYSSVTTGLLATAARCIKESLDRIPNTDRRTRLGFIAVDSSLHYFTIPRDGSESSDPSMLVVSDLDEPFLPIPGDLLVTLTECRENIEIFLDKLQEMFQNTQNGGSAMGSALRAGHKLIGPVGGKLTVLTASLPNIGYGSLEMREDKKVLGTSKESSLLQTGNSFYKSFAVECSKQQISVDMFLFSSQYQDVASLSNLPRYTGGQTYFYPGWNAARSEDAIKFAKEFSDYLSSEIGLEAVLRVRATTGLRMSTFYGNFFNRSSDLCAFPAFPRDQAYVVEVAIDETVTKSVVCLQTAVLHTTCNGERRIRVLTLALPTTQSLADVYASADQTAIATYFSHKAVERTLGSGLEQARDALQAKIIELLSTYRKELAGGSVTGGGLQFPSNLRGLPLLFLALIKNLGLRKSAQIPTDMRSAALCLLSTLPLPLLIQYIYPKMYSLHDMPDDAGVPDPATGEIVLPPLCNLTSERLVPYGLYLIDDGQTQFLWVGRDAVPQLVQDVFGFPDKSQLRVGKQFLPELDNDFNERVRAVIQKSRDFRSRGVGSIIVPQLYVVKEDGEPGLRLWAQSMLVEDRADQGVSLQQWMSLLREKVIQ</sequence>
<comment type="function">
    <text evidence="1">Component of the coat protein complex II (COPII) which promotes the formation of transport vesicles from the endoplasmic reticulum (ER). The coat has two main functions, the physical deformation of the endoplasmic reticulum membrane into vesicles and the selection of cargo molecules (By similarity).</text>
</comment>
<comment type="subunit">
    <text evidence="1">The COPII coat is composed of at least 5 proteins: the SEC23/24 complex, the SEC13/31 complex, and the protein SAR1. Golgi apparatus membrane; Peripheral membrane protein; Cytoplasmic side.</text>
</comment>
<comment type="subcellular location">
    <subcellularLocation>
        <location evidence="1">Cytoplasm</location>
    </subcellularLocation>
    <subcellularLocation>
        <location evidence="1">Cytoplasmic vesicle</location>
        <location evidence="1">COPII-coated vesicle membrane</location>
        <topology evidence="1">Peripheral membrane protein</topology>
        <orientation evidence="1">Cytoplasmic side</orientation>
    </subcellularLocation>
    <subcellularLocation>
        <location evidence="1">Endoplasmic reticulum membrane</location>
        <topology evidence="1">Peripheral membrane protein</topology>
        <orientation evidence="1">Cytoplasmic side</orientation>
    </subcellularLocation>
    <subcellularLocation>
        <location evidence="1">Golgi apparatus membrane</location>
        <topology evidence="1">Peripheral membrane protein</topology>
        <orientation evidence="1">Cytoplasmic side</orientation>
    </subcellularLocation>
</comment>
<comment type="similarity">
    <text evidence="3">Belongs to the SEC23/SEC24 family. SEC24 subfamily.</text>
</comment>
<name>SEC24_COCIM</name>
<keyword id="KW-0963">Cytoplasm</keyword>
<keyword id="KW-0968">Cytoplasmic vesicle</keyword>
<keyword id="KW-0256">Endoplasmic reticulum</keyword>
<keyword id="KW-0931">ER-Golgi transport</keyword>
<keyword id="KW-0333">Golgi apparatus</keyword>
<keyword id="KW-0472">Membrane</keyword>
<keyword id="KW-0479">Metal-binding</keyword>
<keyword id="KW-0653">Protein transport</keyword>
<keyword id="KW-1185">Reference proteome</keyword>
<keyword id="KW-0813">Transport</keyword>
<keyword id="KW-0862">Zinc</keyword>
<proteinExistence type="inferred from homology"/>
<dbReference type="EMBL" id="GG704911">
    <property type="protein sequence ID" value="EAS36360.3"/>
    <property type="molecule type" value="Genomic_DNA"/>
</dbReference>
<dbReference type="RefSeq" id="XP_001247943.2">
    <property type="nucleotide sequence ID" value="XM_001247942.2"/>
</dbReference>
<dbReference type="SMR" id="Q1E6U9"/>
<dbReference type="FunCoup" id="Q1E6U9">
    <property type="interactions" value="843"/>
</dbReference>
<dbReference type="STRING" id="246410.Q1E6U9"/>
<dbReference type="GeneID" id="4566953"/>
<dbReference type="KEGG" id="cim:CIMG_01714"/>
<dbReference type="VEuPathDB" id="FungiDB:CIMG_01714"/>
<dbReference type="InParanoid" id="Q1E6U9"/>
<dbReference type="OMA" id="AVECSKQ"/>
<dbReference type="OrthoDB" id="49016at2759"/>
<dbReference type="Proteomes" id="UP000001261">
    <property type="component" value="Unassembled WGS sequence"/>
</dbReference>
<dbReference type="GO" id="GO:0030127">
    <property type="term" value="C:COPII vesicle coat"/>
    <property type="evidence" value="ECO:0007669"/>
    <property type="project" value="InterPro"/>
</dbReference>
<dbReference type="GO" id="GO:0070971">
    <property type="term" value="C:endoplasmic reticulum exit site"/>
    <property type="evidence" value="ECO:0007669"/>
    <property type="project" value="TreeGrafter"/>
</dbReference>
<dbReference type="GO" id="GO:0005789">
    <property type="term" value="C:endoplasmic reticulum membrane"/>
    <property type="evidence" value="ECO:0007669"/>
    <property type="project" value="UniProtKB-SubCell"/>
</dbReference>
<dbReference type="GO" id="GO:0000139">
    <property type="term" value="C:Golgi membrane"/>
    <property type="evidence" value="ECO:0007669"/>
    <property type="project" value="UniProtKB-SubCell"/>
</dbReference>
<dbReference type="GO" id="GO:0000149">
    <property type="term" value="F:SNARE binding"/>
    <property type="evidence" value="ECO:0007669"/>
    <property type="project" value="TreeGrafter"/>
</dbReference>
<dbReference type="GO" id="GO:0008270">
    <property type="term" value="F:zinc ion binding"/>
    <property type="evidence" value="ECO:0007669"/>
    <property type="project" value="InterPro"/>
</dbReference>
<dbReference type="GO" id="GO:0090110">
    <property type="term" value="P:COPII-coated vesicle cargo loading"/>
    <property type="evidence" value="ECO:0007669"/>
    <property type="project" value="TreeGrafter"/>
</dbReference>
<dbReference type="GO" id="GO:0006886">
    <property type="term" value="P:intracellular protein transport"/>
    <property type="evidence" value="ECO:0007669"/>
    <property type="project" value="InterPro"/>
</dbReference>
<dbReference type="CDD" id="cd01479">
    <property type="entry name" value="Sec24-like"/>
    <property type="match status" value="1"/>
</dbReference>
<dbReference type="Gene3D" id="2.60.40.1670">
    <property type="entry name" value="beta-sandwich domain of Sec23/24"/>
    <property type="match status" value="1"/>
</dbReference>
<dbReference type="Gene3D" id="1.20.120.730">
    <property type="entry name" value="Sec23/Sec24 helical domain"/>
    <property type="match status" value="1"/>
</dbReference>
<dbReference type="Gene3D" id="3.40.20.10">
    <property type="entry name" value="Severin"/>
    <property type="match status" value="1"/>
</dbReference>
<dbReference type="Gene3D" id="3.40.50.410">
    <property type="entry name" value="von Willebrand factor, type A domain"/>
    <property type="match status" value="1"/>
</dbReference>
<dbReference type="Gene3D" id="2.30.30.380">
    <property type="entry name" value="Zn-finger domain of Sec23/24"/>
    <property type="match status" value="1"/>
</dbReference>
<dbReference type="InterPro" id="IPR029006">
    <property type="entry name" value="ADF-H/Gelsolin-like_dom_sf"/>
</dbReference>
<dbReference type="InterPro" id="IPR007123">
    <property type="entry name" value="Gelsolin-like_dom"/>
</dbReference>
<dbReference type="InterPro" id="IPR036180">
    <property type="entry name" value="Gelsolin-like_dom_sf"/>
</dbReference>
<dbReference type="InterPro" id="IPR006900">
    <property type="entry name" value="Sec23/24_helical_dom"/>
</dbReference>
<dbReference type="InterPro" id="IPR036175">
    <property type="entry name" value="Sec23/24_helical_dom_sf"/>
</dbReference>
<dbReference type="InterPro" id="IPR006896">
    <property type="entry name" value="Sec23/24_trunk_dom"/>
</dbReference>
<dbReference type="InterPro" id="IPR012990">
    <property type="entry name" value="Sec23_24_beta_S"/>
</dbReference>
<dbReference type="InterPro" id="IPR050550">
    <property type="entry name" value="SEC23_SEC24_subfamily"/>
</dbReference>
<dbReference type="InterPro" id="IPR041742">
    <property type="entry name" value="Sec24-like_trunk_dom"/>
</dbReference>
<dbReference type="InterPro" id="IPR036465">
    <property type="entry name" value="vWFA_dom_sf"/>
</dbReference>
<dbReference type="InterPro" id="IPR006895">
    <property type="entry name" value="Znf_Sec23_Sec24"/>
</dbReference>
<dbReference type="InterPro" id="IPR036174">
    <property type="entry name" value="Znf_Sec23_Sec24_sf"/>
</dbReference>
<dbReference type="PANTHER" id="PTHR13803">
    <property type="entry name" value="SEC24-RELATED PROTEIN"/>
    <property type="match status" value="1"/>
</dbReference>
<dbReference type="PANTHER" id="PTHR13803:SF39">
    <property type="entry name" value="SECRETORY 24AB, ISOFORM A"/>
    <property type="match status" value="1"/>
</dbReference>
<dbReference type="Pfam" id="PF00626">
    <property type="entry name" value="Gelsolin"/>
    <property type="match status" value="1"/>
</dbReference>
<dbReference type="Pfam" id="PF08033">
    <property type="entry name" value="Sec23_BS"/>
    <property type="match status" value="1"/>
</dbReference>
<dbReference type="Pfam" id="PF04815">
    <property type="entry name" value="Sec23_helical"/>
    <property type="match status" value="1"/>
</dbReference>
<dbReference type="Pfam" id="PF04811">
    <property type="entry name" value="Sec23_trunk"/>
    <property type="match status" value="1"/>
</dbReference>
<dbReference type="Pfam" id="PF04810">
    <property type="entry name" value="zf-Sec23_Sec24"/>
    <property type="match status" value="1"/>
</dbReference>
<dbReference type="SUPFAM" id="SSF81995">
    <property type="entry name" value="beta-sandwich domain of Sec23/24"/>
    <property type="match status" value="1"/>
</dbReference>
<dbReference type="SUPFAM" id="SSF82754">
    <property type="entry name" value="C-terminal, gelsolin-like domain of Sec23/24"/>
    <property type="match status" value="1"/>
</dbReference>
<dbReference type="SUPFAM" id="SSF81811">
    <property type="entry name" value="Helical domain of Sec23/24"/>
    <property type="match status" value="1"/>
</dbReference>
<dbReference type="SUPFAM" id="SSF53300">
    <property type="entry name" value="vWA-like"/>
    <property type="match status" value="1"/>
</dbReference>
<dbReference type="SUPFAM" id="SSF82919">
    <property type="entry name" value="Zn-finger domain of Sec23/24"/>
    <property type="match status" value="1"/>
</dbReference>
<gene>
    <name type="primary">SEC24</name>
    <name type="ORF">CIMG_01714</name>
</gene>